<gene>
    <name evidence="1" type="primary">glcB</name>
    <name type="ordered locus">MAV_2880</name>
</gene>
<organism>
    <name type="scientific">Mycobacterium avium (strain 104)</name>
    <dbReference type="NCBI Taxonomy" id="243243"/>
    <lineage>
        <taxon>Bacteria</taxon>
        <taxon>Bacillati</taxon>
        <taxon>Actinomycetota</taxon>
        <taxon>Actinomycetes</taxon>
        <taxon>Mycobacteriales</taxon>
        <taxon>Mycobacteriaceae</taxon>
        <taxon>Mycobacterium</taxon>
        <taxon>Mycobacterium avium complex (MAC)</taxon>
    </lineage>
</organism>
<sequence>MTDRVSAGNLRVARVLYDFVNDEALPGTDIDPDSFWAGVDKVVTDLTPRNQELLRRRDELQAQIDKWHRQRVIEPLDIDAYRDFLIEIGYLLPEPEDFTITTSGVDDEITTTAGPQLVVPVLNARFALNAANARWGSLYDALYGTDVIPETDGAEKGSSYNKVRGDKVIAYARNFLDQAVPLESGSWADATGLSVEDGRLQVATADGSVGLAEPEKFAGYTGQLGSPDWSVLLVNHGLHIEILIDPQSPVGKTDRAGIKDVVLESAVTTIMDFEDSVAAVDADDKVLGYRNWLGLNKGDLSEEVSKDGKTFTRVLNADRTYTTPDGQGELTLPGRSLLFVRNVGHLMTNDAIVLSDGDEEKEVFEGIMDALFTGLTAIHGLKTGEANGPLQNSRTGSIYIVKPKMHGPDEVAFTCELFSRVEDVLGLPQGTLKIGIMDEERRTTVNLKACIKAAADRVVFINTGFLDRTGDEIHTSMEAGPMIRKGAMKNTTWIKAYEDANVDIGLAAGFKGKAQIGKGMWAMTELMADMVEQKIGQPKAGATTAWVPSPTAATLHAMHYHYVDVGAVQEELAGKKRTTIEQLLTIPLAKELAWAPEEIREEVDNNCQSILGYVVRWVAQGVGCSKVPDIHDVALMEDRATLRISSQLLANWLRHGVITEEDVRASLERMAPLVDAQNAKDAAYQPMAPNFDDSLAFLAAQDLILTGTQQPNGYTEPILHRRRREVKARAAQSN</sequence>
<feature type="chain" id="PRO_1000056904" description="Malate synthase G">
    <location>
        <begin position="1"/>
        <end position="734"/>
    </location>
</feature>
<feature type="active site" description="Proton acceptor" evidence="1">
    <location>
        <position position="341"/>
    </location>
</feature>
<feature type="active site" description="Proton donor" evidence="1">
    <location>
        <position position="638"/>
    </location>
</feature>
<feature type="binding site" evidence="1">
    <location>
        <position position="118"/>
    </location>
    <ligand>
        <name>acetyl-CoA</name>
        <dbReference type="ChEBI" id="CHEBI:57288"/>
    </ligand>
</feature>
<feature type="binding site" evidence="1">
    <location>
        <begin position="125"/>
        <end position="126"/>
    </location>
    <ligand>
        <name>acetyl-CoA</name>
        <dbReference type="ChEBI" id="CHEBI:57288"/>
    </ligand>
</feature>
<feature type="binding site" evidence="1">
    <location>
        <position position="276"/>
    </location>
    <ligand>
        <name>acetyl-CoA</name>
        <dbReference type="ChEBI" id="CHEBI:57288"/>
    </ligand>
</feature>
<feature type="binding site" evidence="1">
    <location>
        <position position="313"/>
    </location>
    <ligand>
        <name>acetyl-CoA</name>
        <dbReference type="ChEBI" id="CHEBI:57288"/>
    </ligand>
</feature>
<feature type="binding site" evidence="1">
    <location>
        <position position="341"/>
    </location>
    <ligand>
        <name>glyoxylate</name>
        <dbReference type="ChEBI" id="CHEBI:36655"/>
    </ligand>
</feature>
<feature type="binding site" evidence="1">
    <location>
        <position position="439"/>
    </location>
    <ligand>
        <name>glyoxylate</name>
        <dbReference type="ChEBI" id="CHEBI:36655"/>
    </ligand>
</feature>
<feature type="binding site" evidence="1">
    <location>
        <position position="439"/>
    </location>
    <ligand>
        <name>Mg(2+)</name>
        <dbReference type="ChEBI" id="CHEBI:18420"/>
    </ligand>
</feature>
<feature type="binding site" evidence="1">
    <location>
        <begin position="464"/>
        <end position="467"/>
    </location>
    <ligand>
        <name>glyoxylate</name>
        <dbReference type="ChEBI" id="CHEBI:36655"/>
    </ligand>
</feature>
<feature type="binding site" evidence="1">
    <location>
        <position position="467"/>
    </location>
    <ligand>
        <name>Mg(2+)</name>
        <dbReference type="ChEBI" id="CHEBI:18420"/>
    </ligand>
</feature>
<feature type="binding site" evidence="1">
    <location>
        <position position="548"/>
    </location>
    <ligand>
        <name>acetyl-CoA</name>
        <dbReference type="ChEBI" id="CHEBI:57288"/>
    </ligand>
</feature>
<feature type="modified residue" description="Cysteine sulfenic acid (-SOH)" evidence="1">
    <location>
        <position position="624"/>
    </location>
</feature>
<comment type="function">
    <text evidence="1">Involved in the glycolate utilization. Catalyzes the condensation and subsequent hydrolysis of acetyl-coenzyme A (acetyl-CoA) and glyoxylate to form malate and CoA.</text>
</comment>
<comment type="catalytic activity">
    <reaction evidence="1">
        <text>glyoxylate + acetyl-CoA + H2O = (S)-malate + CoA + H(+)</text>
        <dbReference type="Rhea" id="RHEA:18181"/>
        <dbReference type="ChEBI" id="CHEBI:15377"/>
        <dbReference type="ChEBI" id="CHEBI:15378"/>
        <dbReference type="ChEBI" id="CHEBI:15589"/>
        <dbReference type="ChEBI" id="CHEBI:36655"/>
        <dbReference type="ChEBI" id="CHEBI:57287"/>
        <dbReference type="ChEBI" id="CHEBI:57288"/>
        <dbReference type="EC" id="2.3.3.9"/>
    </reaction>
</comment>
<comment type="cofactor">
    <cofactor evidence="1">
        <name>Mg(2+)</name>
        <dbReference type="ChEBI" id="CHEBI:18420"/>
    </cofactor>
</comment>
<comment type="pathway">
    <text evidence="1">Carbohydrate metabolism; glyoxylate cycle; (S)-malate from isocitrate: step 2/2.</text>
</comment>
<comment type="subunit">
    <text evidence="1">Monomer.</text>
</comment>
<comment type="subcellular location">
    <subcellularLocation>
        <location evidence="1">Cytoplasm</location>
    </subcellularLocation>
</comment>
<comment type="similarity">
    <text evidence="1">Belongs to the malate synthase family. GlcB subfamily.</text>
</comment>
<accession>A0QGM8</accession>
<name>MASZ_MYCA1</name>
<reference key="1">
    <citation type="submission" date="2006-10" db="EMBL/GenBank/DDBJ databases">
        <authorList>
            <person name="Fleischmann R.D."/>
            <person name="Dodson R.J."/>
            <person name="Haft D.H."/>
            <person name="Merkel J.S."/>
            <person name="Nelson W.C."/>
            <person name="Fraser C.M."/>
        </authorList>
    </citation>
    <scope>NUCLEOTIDE SEQUENCE [LARGE SCALE GENOMIC DNA]</scope>
    <source>
        <strain>104</strain>
    </source>
</reference>
<protein>
    <recommendedName>
        <fullName evidence="1">Malate synthase G</fullName>
        <ecNumber evidence="1">2.3.3.9</ecNumber>
    </recommendedName>
</protein>
<proteinExistence type="inferred from homology"/>
<dbReference type="EC" id="2.3.3.9" evidence="1"/>
<dbReference type="EMBL" id="CP000479">
    <property type="protein sequence ID" value="ABK64489.1"/>
    <property type="molecule type" value="Genomic_DNA"/>
</dbReference>
<dbReference type="RefSeq" id="WP_011725110.1">
    <property type="nucleotide sequence ID" value="NC_008595.1"/>
</dbReference>
<dbReference type="SMR" id="A0QGM8"/>
<dbReference type="KEGG" id="mav:MAV_2880"/>
<dbReference type="HOGENOM" id="CLU_028446_1_0_11"/>
<dbReference type="UniPathway" id="UPA00703">
    <property type="reaction ID" value="UER00720"/>
</dbReference>
<dbReference type="Proteomes" id="UP000001574">
    <property type="component" value="Chromosome"/>
</dbReference>
<dbReference type="GO" id="GO:0005829">
    <property type="term" value="C:cytosol"/>
    <property type="evidence" value="ECO:0007669"/>
    <property type="project" value="TreeGrafter"/>
</dbReference>
<dbReference type="GO" id="GO:0000287">
    <property type="term" value="F:magnesium ion binding"/>
    <property type="evidence" value="ECO:0007669"/>
    <property type="project" value="TreeGrafter"/>
</dbReference>
<dbReference type="GO" id="GO:0004474">
    <property type="term" value="F:malate synthase activity"/>
    <property type="evidence" value="ECO:0007669"/>
    <property type="project" value="UniProtKB-UniRule"/>
</dbReference>
<dbReference type="GO" id="GO:0009436">
    <property type="term" value="P:glyoxylate catabolic process"/>
    <property type="evidence" value="ECO:0007669"/>
    <property type="project" value="TreeGrafter"/>
</dbReference>
<dbReference type="GO" id="GO:0006097">
    <property type="term" value="P:glyoxylate cycle"/>
    <property type="evidence" value="ECO:0007669"/>
    <property type="project" value="UniProtKB-UniRule"/>
</dbReference>
<dbReference type="GO" id="GO:0006099">
    <property type="term" value="P:tricarboxylic acid cycle"/>
    <property type="evidence" value="ECO:0007669"/>
    <property type="project" value="UniProtKB-KW"/>
</dbReference>
<dbReference type="CDD" id="cd00728">
    <property type="entry name" value="malate_synt_G"/>
    <property type="match status" value="1"/>
</dbReference>
<dbReference type="FunFam" id="3.20.20.360:FF:000002">
    <property type="entry name" value="Malate synthase G"/>
    <property type="match status" value="1"/>
</dbReference>
<dbReference type="Gene3D" id="3.20.20.360">
    <property type="entry name" value="Malate synthase, domain 3"/>
    <property type="match status" value="2"/>
</dbReference>
<dbReference type="Gene3D" id="1.20.1220.12">
    <property type="entry name" value="Malate synthase, domain III"/>
    <property type="match status" value="1"/>
</dbReference>
<dbReference type="HAMAP" id="MF_00641">
    <property type="entry name" value="Malate_synth_G"/>
    <property type="match status" value="1"/>
</dbReference>
<dbReference type="InterPro" id="IPR044856">
    <property type="entry name" value="Malate_synth_C_sf"/>
</dbReference>
<dbReference type="InterPro" id="IPR011076">
    <property type="entry name" value="Malate_synth_sf"/>
</dbReference>
<dbReference type="InterPro" id="IPR001465">
    <property type="entry name" value="Malate_synthase_TIM"/>
</dbReference>
<dbReference type="InterPro" id="IPR006253">
    <property type="entry name" value="Malate_synthG"/>
</dbReference>
<dbReference type="InterPro" id="IPR048355">
    <property type="entry name" value="MS_C"/>
</dbReference>
<dbReference type="InterPro" id="IPR048356">
    <property type="entry name" value="MS_N"/>
</dbReference>
<dbReference type="InterPro" id="IPR046363">
    <property type="entry name" value="MS_N_TIM-barrel_dom"/>
</dbReference>
<dbReference type="InterPro" id="IPR048357">
    <property type="entry name" value="MSG_insertion"/>
</dbReference>
<dbReference type="NCBIfam" id="TIGR01345">
    <property type="entry name" value="malate_syn_G"/>
    <property type="match status" value="1"/>
</dbReference>
<dbReference type="NCBIfam" id="NF002825">
    <property type="entry name" value="PRK02999.1"/>
    <property type="match status" value="1"/>
</dbReference>
<dbReference type="PANTHER" id="PTHR42739">
    <property type="entry name" value="MALATE SYNTHASE G"/>
    <property type="match status" value="1"/>
</dbReference>
<dbReference type="PANTHER" id="PTHR42739:SF1">
    <property type="entry name" value="MALATE SYNTHASE G"/>
    <property type="match status" value="1"/>
</dbReference>
<dbReference type="Pfam" id="PF20659">
    <property type="entry name" value="MS_C"/>
    <property type="match status" value="1"/>
</dbReference>
<dbReference type="Pfam" id="PF20656">
    <property type="entry name" value="MS_N"/>
    <property type="match status" value="1"/>
</dbReference>
<dbReference type="Pfam" id="PF01274">
    <property type="entry name" value="MS_TIM-barrel"/>
    <property type="match status" value="1"/>
</dbReference>
<dbReference type="Pfam" id="PF20658">
    <property type="entry name" value="MSG_insertion"/>
    <property type="match status" value="1"/>
</dbReference>
<dbReference type="SUPFAM" id="SSF51645">
    <property type="entry name" value="Malate synthase G"/>
    <property type="match status" value="1"/>
</dbReference>
<evidence type="ECO:0000255" key="1">
    <source>
        <dbReference type="HAMAP-Rule" id="MF_00641"/>
    </source>
</evidence>
<keyword id="KW-0963">Cytoplasm</keyword>
<keyword id="KW-0329">Glyoxylate bypass</keyword>
<keyword id="KW-0460">Magnesium</keyword>
<keyword id="KW-0479">Metal-binding</keyword>
<keyword id="KW-0558">Oxidation</keyword>
<keyword id="KW-0808">Transferase</keyword>
<keyword id="KW-0816">Tricarboxylic acid cycle</keyword>